<reference key="1">
    <citation type="submission" date="2004-11" db="EMBL/GenBank/DDBJ databases">
        <authorList>
            <consortium name="The German cDNA consortium"/>
        </authorList>
    </citation>
    <scope>NUCLEOTIDE SEQUENCE [LARGE SCALE MRNA]</scope>
    <source>
        <tissue>Kidney</tissue>
    </source>
</reference>
<proteinExistence type="evidence at transcript level"/>
<comment type="function">
    <text evidence="1">Essential regulator of neutrophil polarity. Regulates neutrophil polarization by regulating AKT1 phosphorylation through a mechanism that is independent of PIK3CG activity (By similarity).</text>
</comment>
<comment type="subunit">
    <text evidence="1">Heterodimer with PALS1. Interacts with DLG5 and NF2. Interacts (via guanylate kinase-like domain) with WHRN (via third PDZ domain) (By similarity).</text>
</comment>
<comment type="subcellular location">
    <subcellularLocation>
        <location evidence="3">Cell membrane</location>
        <topology evidence="3">Lipid-anchor</topology>
    </subcellularLocation>
    <subcellularLocation>
        <location evidence="2">Cell projection</location>
        <location evidence="2">Stereocilium</location>
    </subcellularLocation>
    <text evidence="2 3">Colocalizes with WHRN at stereocilium tip during hair cell development. Colocalizes with PALS1 in the retina, at the outer limiting membrane (OLM). Colocalizes with WHRN in the retina, at the outer limiting membrane (OLM), outer plexifirm layer (OPL), basal bodies, and at connecting cilium (CC) (By similarity). Colocalizes with NF2 in non-myelin-forming Schwann cells (By similarity).</text>
</comment>
<comment type="PTM">
    <text evidence="3">Palmitoylated.</text>
</comment>
<comment type="similarity">
    <text evidence="7">Belongs to the MAGUK family.</text>
</comment>
<accession>Q5RDW4</accession>
<organism>
    <name type="scientific">Pongo abelii</name>
    <name type="common">Sumatran orangutan</name>
    <name type="synonym">Pongo pygmaeus abelii</name>
    <dbReference type="NCBI Taxonomy" id="9601"/>
    <lineage>
        <taxon>Eukaryota</taxon>
        <taxon>Metazoa</taxon>
        <taxon>Chordata</taxon>
        <taxon>Craniata</taxon>
        <taxon>Vertebrata</taxon>
        <taxon>Euteleostomi</taxon>
        <taxon>Mammalia</taxon>
        <taxon>Eutheria</taxon>
        <taxon>Euarchontoglires</taxon>
        <taxon>Primates</taxon>
        <taxon>Haplorrhini</taxon>
        <taxon>Catarrhini</taxon>
        <taxon>Hominidae</taxon>
        <taxon>Pongo</taxon>
    </lineage>
</organism>
<gene>
    <name type="primary">MPP1</name>
    <name type="synonym">EMP55</name>
</gene>
<dbReference type="EMBL" id="CR857779">
    <property type="protein sequence ID" value="CAH90043.1"/>
    <property type="molecule type" value="mRNA"/>
</dbReference>
<dbReference type="RefSeq" id="NP_001124975.1">
    <property type="nucleotide sequence ID" value="NM_001131503.1"/>
</dbReference>
<dbReference type="SMR" id="Q5RDW4"/>
<dbReference type="FunCoup" id="Q5RDW4">
    <property type="interactions" value="170"/>
</dbReference>
<dbReference type="STRING" id="9601.ENSPPYP00000023388"/>
<dbReference type="Ensembl" id="ENSPPYT00000024366.3">
    <property type="protein sequence ID" value="ENSPPYP00000023388.2"/>
    <property type="gene ID" value="ENSPPYG00000020893.3"/>
</dbReference>
<dbReference type="GeneID" id="100171848"/>
<dbReference type="KEGG" id="pon:100171848"/>
<dbReference type="CTD" id="4354"/>
<dbReference type="eggNOG" id="KOG0609">
    <property type="taxonomic scope" value="Eukaryota"/>
</dbReference>
<dbReference type="GeneTree" id="ENSGT00940000158744"/>
<dbReference type="HOGENOM" id="CLU_001715_5_1_1"/>
<dbReference type="InParanoid" id="Q5RDW4"/>
<dbReference type="OMA" id="KETQGMV"/>
<dbReference type="OrthoDB" id="65789at2759"/>
<dbReference type="TreeFam" id="TF314263"/>
<dbReference type="Proteomes" id="UP000001595">
    <property type="component" value="Chromosome X"/>
</dbReference>
<dbReference type="GO" id="GO:0034451">
    <property type="term" value="C:centriolar satellite"/>
    <property type="evidence" value="ECO:0007669"/>
    <property type="project" value="Ensembl"/>
</dbReference>
<dbReference type="GO" id="GO:0030863">
    <property type="term" value="C:cortical cytoskeleton"/>
    <property type="evidence" value="ECO:0007669"/>
    <property type="project" value="Ensembl"/>
</dbReference>
<dbReference type="GO" id="GO:0005886">
    <property type="term" value="C:plasma membrane"/>
    <property type="evidence" value="ECO:0007669"/>
    <property type="project" value="UniProtKB-SubCell"/>
</dbReference>
<dbReference type="GO" id="GO:0032420">
    <property type="term" value="C:stereocilium"/>
    <property type="evidence" value="ECO:0007669"/>
    <property type="project" value="UniProtKB-SubCell"/>
</dbReference>
<dbReference type="GO" id="GO:0016740">
    <property type="term" value="F:transferase activity"/>
    <property type="evidence" value="ECO:0007669"/>
    <property type="project" value="UniProtKB-KW"/>
</dbReference>
<dbReference type="GO" id="GO:0090022">
    <property type="term" value="P:regulation of neutrophil chemotaxis"/>
    <property type="evidence" value="ECO:0000250"/>
    <property type="project" value="UniProtKB"/>
</dbReference>
<dbReference type="CDD" id="cd00071">
    <property type="entry name" value="GMPK"/>
    <property type="match status" value="1"/>
</dbReference>
<dbReference type="CDD" id="cd10830">
    <property type="entry name" value="PDZ_MPP1-like"/>
    <property type="match status" value="1"/>
</dbReference>
<dbReference type="CDD" id="cd12080">
    <property type="entry name" value="SH3_MPP1"/>
    <property type="match status" value="1"/>
</dbReference>
<dbReference type="FunFam" id="2.30.30.40:FF:000135">
    <property type="entry name" value="55 kDa erythrocyte membrane protein"/>
    <property type="match status" value="1"/>
</dbReference>
<dbReference type="FunFam" id="3.30.63.10:FF:000002">
    <property type="entry name" value="Guanylate kinase 1"/>
    <property type="match status" value="1"/>
</dbReference>
<dbReference type="FunFam" id="3.40.50.300:FF:000146">
    <property type="entry name" value="MAGUK p55 subfamily member 6 isoform X1"/>
    <property type="match status" value="1"/>
</dbReference>
<dbReference type="FunFam" id="2.30.42.10:FF:000016">
    <property type="entry name" value="peripheral plasma membrane protein CASK isoform X2"/>
    <property type="match status" value="1"/>
</dbReference>
<dbReference type="Gene3D" id="2.30.42.10">
    <property type="match status" value="1"/>
</dbReference>
<dbReference type="Gene3D" id="3.40.50.300">
    <property type="entry name" value="P-loop containing nucleotide triphosphate hydrolases"/>
    <property type="match status" value="1"/>
</dbReference>
<dbReference type="Gene3D" id="2.30.30.40">
    <property type="entry name" value="SH3 Domains"/>
    <property type="match status" value="1"/>
</dbReference>
<dbReference type="InterPro" id="IPR008145">
    <property type="entry name" value="GK/Ca_channel_bsu"/>
</dbReference>
<dbReference type="InterPro" id="IPR008144">
    <property type="entry name" value="Guanylate_kin-like_dom"/>
</dbReference>
<dbReference type="InterPro" id="IPR020590">
    <property type="entry name" value="Guanylate_kinase_CS"/>
</dbReference>
<dbReference type="InterPro" id="IPR050716">
    <property type="entry name" value="MAGUK"/>
</dbReference>
<dbReference type="InterPro" id="IPR035475">
    <property type="entry name" value="MPP1_SH3"/>
</dbReference>
<dbReference type="InterPro" id="IPR027417">
    <property type="entry name" value="P-loop_NTPase"/>
</dbReference>
<dbReference type="InterPro" id="IPR001478">
    <property type="entry name" value="PDZ"/>
</dbReference>
<dbReference type="InterPro" id="IPR036034">
    <property type="entry name" value="PDZ_sf"/>
</dbReference>
<dbReference type="InterPro" id="IPR036028">
    <property type="entry name" value="SH3-like_dom_sf"/>
</dbReference>
<dbReference type="InterPro" id="IPR001452">
    <property type="entry name" value="SH3_domain"/>
</dbReference>
<dbReference type="PANTHER" id="PTHR23122">
    <property type="entry name" value="MEMBRANE-ASSOCIATED GUANYLATE KINASE MAGUK"/>
    <property type="match status" value="1"/>
</dbReference>
<dbReference type="Pfam" id="PF00625">
    <property type="entry name" value="Guanylate_kin"/>
    <property type="match status" value="1"/>
</dbReference>
<dbReference type="Pfam" id="PF00595">
    <property type="entry name" value="PDZ"/>
    <property type="match status" value="1"/>
</dbReference>
<dbReference type="Pfam" id="PF00018">
    <property type="entry name" value="SH3_1"/>
    <property type="match status" value="1"/>
</dbReference>
<dbReference type="SMART" id="SM00072">
    <property type="entry name" value="GuKc"/>
    <property type="match status" value="1"/>
</dbReference>
<dbReference type="SMART" id="SM00228">
    <property type="entry name" value="PDZ"/>
    <property type="match status" value="1"/>
</dbReference>
<dbReference type="SMART" id="SM00326">
    <property type="entry name" value="SH3"/>
    <property type="match status" value="1"/>
</dbReference>
<dbReference type="SUPFAM" id="SSF52540">
    <property type="entry name" value="P-loop containing nucleoside triphosphate hydrolases"/>
    <property type="match status" value="1"/>
</dbReference>
<dbReference type="SUPFAM" id="SSF50156">
    <property type="entry name" value="PDZ domain-like"/>
    <property type="match status" value="1"/>
</dbReference>
<dbReference type="SUPFAM" id="SSF50044">
    <property type="entry name" value="SH3-domain"/>
    <property type="match status" value="1"/>
</dbReference>
<dbReference type="PROSITE" id="PS00856">
    <property type="entry name" value="GUANYLATE_KINASE_1"/>
    <property type="match status" value="1"/>
</dbReference>
<dbReference type="PROSITE" id="PS50052">
    <property type="entry name" value="GUANYLATE_KINASE_2"/>
    <property type="match status" value="1"/>
</dbReference>
<dbReference type="PROSITE" id="PS50106">
    <property type="entry name" value="PDZ"/>
    <property type="match status" value="1"/>
</dbReference>
<dbReference type="PROSITE" id="PS50002">
    <property type="entry name" value="SH3"/>
    <property type="match status" value="1"/>
</dbReference>
<evidence type="ECO:0000250" key="1"/>
<evidence type="ECO:0000250" key="2">
    <source>
        <dbReference type="UniProtKB" id="P70290"/>
    </source>
</evidence>
<evidence type="ECO:0000250" key="3">
    <source>
        <dbReference type="UniProtKB" id="Q00013"/>
    </source>
</evidence>
<evidence type="ECO:0000255" key="4">
    <source>
        <dbReference type="PROSITE-ProRule" id="PRU00100"/>
    </source>
</evidence>
<evidence type="ECO:0000255" key="5">
    <source>
        <dbReference type="PROSITE-ProRule" id="PRU00143"/>
    </source>
</evidence>
<evidence type="ECO:0000255" key="6">
    <source>
        <dbReference type="PROSITE-ProRule" id="PRU00192"/>
    </source>
</evidence>
<evidence type="ECO:0000305" key="7"/>
<protein>
    <recommendedName>
        <fullName>55 kDa erythrocyte membrane protein</fullName>
        <shortName>p55</shortName>
    </recommendedName>
    <alternativeName>
        <fullName>Membrane protein, palmitoylated 1</fullName>
    </alternativeName>
</protein>
<name>EM55_PONAB</name>
<sequence>MTLKASEGESGGSMHTALSDLYLEHLLQKRSRPEAVSHPLNTVTEDMYTNGSPAPGSPAQVKGQEVRKVRLIQFEKVTEEPMGITLKLNEKQSCTVARILHGGMIHRQGSLHVGDEILEINGTNVTNHSVDQLQKAMKETKGMISLKVIPNQQSRLPALQMFMRAQFDYDPKKDNLIPCKEAGLKFATGDIIQIINKDDSNWWQGRVEGSSKESAGLIPSPELQEWRVASVAQSAPSEAPSCSPFGKKKKYKDKYLAKHSSIFDQLDVVSYEEVVRLPAFKRKTLVLIGASGVGRSHIKNALLSQNPEKFVYPVPYTTRPPRKSEEDGKEYHFISTEEMTRNISANEFLEFGSYQGNMFGTKFETVHQIHKQDKIAILDIEPQTLKIVRTAELSPFIVFIAPTDQGTQTEALQQLQKDSEAIRSQYAHYFDLSLVNNGVDETLKKLQEAFDQACSSPQWVPVSWVY</sequence>
<keyword id="KW-0007">Acetylation</keyword>
<keyword id="KW-1003">Cell membrane</keyword>
<keyword id="KW-0966">Cell projection</keyword>
<keyword id="KW-0449">Lipoprotein</keyword>
<keyword id="KW-0472">Membrane</keyword>
<keyword id="KW-0564">Palmitate</keyword>
<keyword id="KW-0597">Phosphoprotein</keyword>
<keyword id="KW-1185">Reference proteome</keyword>
<keyword id="KW-0728">SH3 domain</keyword>
<keyword id="KW-0808">Transferase</keyword>
<feature type="initiator methionine" description="Removed" evidence="3">
    <location>
        <position position="1"/>
    </location>
</feature>
<feature type="chain" id="PRO_0000347219" description="55 kDa erythrocyte membrane protein">
    <location>
        <begin position="2"/>
        <end position="466"/>
    </location>
</feature>
<feature type="domain" description="PDZ" evidence="5">
    <location>
        <begin position="71"/>
        <end position="152"/>
    </location>
</feature>
<feature type="domain" description="SH3" evidence="6">
    <location>
        <begin position="158"/>
        <end position="228"/>
    </location>
</feature>
<feature type="domain" description="Guanylate kinase-like" evidence="4">
    <location>
        <begin position="282"/>
        <end position="451"/>
    </location>
</feature>
<feature type="region of interest" description="Interaction with PALS1" evidence="1">
    <location>
        <begin position="268"/>
        <end position="466"/>
    </location>
</feature>
<feature type="modified residue" description="N-acetylthreonine" evidence="3">
    <location>
        <position position="2"/>
    </location>
</feature>
<feature type="modified residue" description="Phosphoserine" evidence="3">
    <location>
        <position position="13"/>
    </location>
</feature>
<feature type="modified residue" description="Phosphoserine" evidence="3">
    <location>
        <position position="19"/>
    </location>
</feature>
<feature type="modified residue" description="Phosphothreonine" evidence="3">
    <location>
        <position position="49"/>
    </location>
</feature>
<feature type="modified residue" description="Phosphoserine" evidence="2">
    <location>
        <position position="52"/>
    </location>
</feature>
<feature type="modified residue" description="Phosphoserine" evidence="3">
    <location>
        <position position="57"/>
    </location>
</feature>
<feature type="modified residue" description="Phosphoserine" evidence="3">
    <location>
        <position position="110"/>
    </location>
</feature>
<feature type="modified residue" description="Phosphoserine" evidence="3">
    <location>
        <position position="243"/>
    </location>
</feature>